<keyword id="KW-0067">ATP-binding</keyword>
<keyword id="KW-0963">Cytoplasm</keyword>
<keyword id="KW-1015">Disulfide bond</keyword>
<keyword id="KW-0547">Nucleotide-binding</keyword>
<keyword id="KW-0694">RNA-binding</keyword>
<keyword id="KW-0808">Transferase</keyword>
<keyword id="KW-0819">tRNA processing</keyword>
<keyword id="KW-0820">tRNA-binding</keyword>
<feature type="chain" id="PRO_1000009553" description="tRNA-specific 2-thiouridylase MnmA">
    <location>
        <begin position="1"/>
        <end position="374"/>
    </location>
</feature>
<feature type="region of interest" description="Interaction with target base in tRNA" evidence="1">
    <location>
        <begin position="103"/>
        <end position="105"/>
    </location>
</feature>
<feature type="region of interest" description="Interaction with tRNA" evidence="1">
    <location>
        <begin position="154"/>
        <end position="156"/>
    </location>
</feature>
<feature type="region of interest" description="Interaction with tRNA" evidence="1">
    <location>
        <begin position="316"/>
        <end position="317"/>
    </location>
</feature>
<feature type="active site" description="Nucleophile" evidence="1">
    <location>
        <position position="108"/>
    </location>
</feature>
<feature type="active site" description="Cysteine persulfide intermediate" evidence="1">
    <location>
        <position position="204"/>
    </location>
</feature>
<feature type="binding site" evidence="1">
    <location>
        <begin position="17"/>
        <end position="24"/>
    </location>
    <ligand>
        <name>ATP</name>
        <dbReference type="ChEBI" id="CHEBI:30616"/>
    </ligand>
</feature>
<feature type="binding site" evidence="1">
    <location>
        <position position="43"/>
    </location>
    <ligand>
        <name>ATP</name>
        <dbReference type="ChEBI" id="CHEBI:30616"/>
    </ligand>
</feature>
<feature type="binding site" evidence="1">
    <location>
        <position position="132"/>
    </location>
    <ligand>
        <name>ATP</name>
        <dbReference type="ChEBI" id="CHEBI:30616"/>
    </ligand>
</feature>
<feature type="site" description="Interaction with tRNA" evidence="1">
    <location>
        <position position="133"/>
    </location>
</feature>
<feature type="site" description="Interaction with tRNA" evidence="1">
    <location>
        <position position="348"/>
    </location>
</feature>
<feature type="disulfide bond" description="Alternate" evidence="1">
    <location>
        <begin position="108"/>
        <end position="204"/>
    </location>
</feature>
<name>MNMA_PSEE4</name>
<dbReference type="EC" id="2.8.1.13" evidence="1"/>
<dbReference type="EMBL" id="CT573326">
    <property type="protein sequence ID" value="CAK15021.1"/>
    <property type="molecule type" value="Genomic_DNA"/>
</dbReference>
<dbReference type="RefSeq" id="WP_011533424.1">
    <property type="nucleotide sequence ID" value="NC_008027.1"/>
</dbReference>
<dbReference type="SMR" id="Q1IBE4"/>
<dbReference type="STRING" id="384676.PSEEN2200"/>
<dbReference type="GeneID" id="32805399"/>
<dbReference type="KEGG" id="pen:PSEEN2200"/>
<dbReference type="eggNOG" id="COG0482">
    <property type="taxonomic scope" value="Bacteria"/>
</dbReference>
<dbReference type="HOGENOM" id="CLU_035188_1_0_6"/>
<dbReference type="OrthoDB" id="9800696at2"/>
<dbReference type="Proteomes" id="UP000000658">
    <property type="component" value="Chromosome"/>
</dbReference>
<dbReference type="GO" id="GO:0005737">
    <property type="term" value="C:cytoplasm"/>
    <property type="evidence" value="ECO:0007669"/>
    <property type="project" value="UniProtKB-SubCell"/>
</dbReference>
<dbReference type="GO" id="GO:0005524">
    <property type="term" value="F:ATP binding"/>
    <property type="evidence" value="ECO:0007669"/>
    <property type="project" value="UniProtKB-KW"/>
</dbReference>
<dbReference type="GO" id="GO:0000049">
    <property type="term" value="F:tRNA binding"/>
    <property type="evidence" value="ECO:0007669"/>
    <property type="project" value="UniProtKB-KW"/>
</dbReference>
<dbReference type="GO" id="GO:0103016">
    <property type="term" value="F:tRNA-uridine 2-sulfurtransferase activity"/>
    <property type="evidence" value="ECO:0007669"/>
    <property type="project" value="UniProtKB-EC"/>
</dbReference>
<dbReference type="GO" id="GO:0002143">
    <property type="term" value="P:tRNA wobble position uridine thiolation"/>
    <property type="evidence" value="ECO:0007669"/>
    <property type="project" value="TreeGrafter"/>
</dbReference>
<dbReference type="CDD" id="cd01998">
    <property type="entry name" value="MnmA_TRMU-like"/>
    <property type="match status" value="1"/>
</dbReference>
<dbReference type="FunFam" id="2.30.30.280:FF:000001">
    <property type="entry name" value="tRNA-specific 2-thiouridylase MnmA"/>
    <property type="match status" value="1"/>
</dbReference>
<dbReference type="FunFam" id="2.40.30.10:FF:000023">
    <property type="entry name" value="tRNA-specific 2-thiouridylase MnmA"/>
    <property type="match status" value="1"/>
</dbReference>
<dbReference type="FunFam" id="3.40.50.620:FF:000004">
    <property type="entry name" value="tRNA-specific 2-thiouridylase MnmA"/>
    <property type="match status" value="1"/>
</dbReference>
<dbReference type="Gene3D" id="2.30.30.280">
    <property type="entry name" value="Adenine nucleotide alpha hydrolases-like domains"/>
    <property type="match status" value="1"/>
</dbReference>
<dbReference type="Gene3D" id="3.40.50.620">
    <property type="entry name" value="HUPs"/>
    <property type="match status" value="1"/>
</dbReference>
<dbReference type="Gene3D" id="2.40.30.10">
    <property type="entry name" value="Translation factors"/>
    <property type="match status" value="1"/>
</dbReference>
<dbReference type="HAMAP" id="MF_00144">
    <property type="entry name" value="tRNA_thiouridyl_MnmA"/>
    <property type="match status" value="1"/>
</dbReference>
<dbReference type="InterPro" id="IPR004506">
    <property type="entry name" value="MnmA-like"/>
</dbReference>
<dbReference type="InterPro" id="IPR046885">
    <property type="entry name" value="MnmA-like_C"/>
</dbReference>
<dbReference type="InterPro" id="IPR046884">
    <property type="entry name" value="MnmA-like_central"/>
</dbReference>
<dbReference type="InterPro" id="IPR023382">
    <property type="entry name" value="MnmA-like_central_sf"/>
</dbReference>
<dbReference type="InterPro" id="IPR014729">
    <property type="entry name" value="Rossmann-like_a/b/a_fold"/>
</dbReference>
<dbReference type="NCBIfam" id="NF001138">
    <property type="entry name" value="PRK00143.1"/>
    <property type="match status" value="1"/>
</dbReference>
<dbReference type="NCBIfam" id="TIGR00420">
    <property type="entry name" value="trmU"/>
    <property type="match status" value="1"/>
</dbReference>
<dbReference type="PANTHER" id="PTHR11933:SF5">
    <property type="entry name" value="MITOCHONDRIAL TRNA-SPECIFIC 2-THIOURIDYLASE 1"/>
    <property type="match status" value="1"/>
</dbReference>
<dbReference type="PANTHER" id="PTHR11933">
    <property type="entry name" value="TRNA 5-METHYLAMINOMETHYL-2-THIOURIDYLATE -METHYLTRANSFERASE"/>
    <property type="match status" value="1"/>
</dbReference>
<dbReference type="Pfam" id="PF03054">
    <property type="entry name" value="tRNA_Me_trans"/>
    <property type="match status" value="1"/>
</dbReference>
<dbReference type="Pfam" id="PF20258">
    <property type="entry name" value="tRNA_Me_trans_C"/>
    <property type="match status" value="1"/>
</dbReference>
<dbReference type="Pfam" id="PF20259">
    <property type="entry name" value="tRNA_Me_trans_M"/>
    <property type="match status" value="1"/>
</dbReference>
<dbReference type="SUPFAM" id="SSF52402">
    <property type="entry name" value="Adenine nucleotide alpha hydrolases-like"/>
    <property type="match status" value="1"/>
</dbReference>
<gene>
    <name evidence="1" type="primary">mnmA</name>
    <name type="synonym">trmU</name>
    <name type="ordered locus">PSEEN2200</name>
</gene>
<reference key="1">
    <citation type="journal article" date="2006" name="Nat. Biotechnol.">
        <title>Complete genome sequence of the entomopathogenic and metabolically versatile soil bacterium Pseudomonas entomophila.</title>
        <authorList>
            <person name="Vodovar N."/>
            <person name="Vallenet D."/>
            <person name="Cruveiller S."/>
            <person name="Rouy Z."/>
            <person name="Barbe V."/>
            <person name="Acosta C."/>
            <person name="Cattolico L."/>
            <person name="Jubin C."/>
            <person name="Lajus A."/>
            <person name="Segurens B."/>
            <person name="Vacherie B."/>
            <person name="Wincker P."/>
            <person name="Weissenbach J."/>
            <person name="Lemaitre B."/>
            <person name="Medigue C."/>
            <person name="Boccard F."/>
        </authorList>
    </citation>
    <scope>NUCLEOTIDE SEQUENCE [LARGE SCALE GENOMIC DNA]</scope>
    <source>
        <strain>L48</strain>
    </source>
</reference>
<evidence type="ECO:0000255" key="1">
    <source>
        <dbReference type="HAMAP-Rule" id="MF_00144"/>
    </source>
</evidence>
<proteinExistence type="inferred from homology"/>
<sequence length="374" mass="41766">MTSPALKDPAKTRVIVGMSGGVDSSVSALLLMEQGYQVEGLFMKNWEEDDGTEYCTAREDLADAQAVCDRIGIKLHTANFAAEYWDNVFEHFLEEYKAGRTPNPDILCNREIKFKAFLDYALSLGADLIATGHYVRRRDTGELTELLKGLDPNKDQSYFLHAVGGKEIARTLFPVGELEKPEVRAIAEKHGLATAKKKDSTGICFIGERRFSDFLKQYLPAQPGEIQTTEGEVIGRHHGLMYHTIGQRQGLGIGGLKDAGDEPWYVLHKDLARNVLVVGQGNEHPWLFSRALLASEIFWVNPIDLSSPRRLTAKVRYRQGDQQCTLERTENGYRAMFDEPQRAVTPGQSVVFYDGEVCLGGGVIETAEPWSPRQ</sequence>
<protein>
    <recommendedName>
        <fullName evidence="1">tRNA-specific 2-thiouridylase MnmA</fullName>
        <ecNumber evidence="1">2.8.1.13</ecNumber>
    </recommendedName>
</protein>
<organism>
    <name type="scientific">Pseudomonas entomophila (strain L48)</name>
    <dbReference type="NCBI Taxonomy" id="384676"/>
    <lineage>
        <taxon>Bacteria</taxon>
        <taxon>Pseudomonadati</taxon>
        <taxon>Pseudomonadota</taxon>
        <taxon>Gammaproteobacteria</taxon>
        <taxon>Pseudomonadales</taxon>
        <taxon>Pseudomonadaceae</taxon>
        <taxon>Pseudomonas</taxon>
    </lineage>
</organism>
<comment type="function">
    <text evidence="1">Catalyzes the 2-thiolation of uridine at the wobble position (U34) of tRNA, leading to the formation of s(2)U34.</text>
</comment>
<comment type="catalytic activity">
    <reaction evidence="1">
        <text>S-sulfanyl-L-cysteinyl-[protein] + uridine(34) in tRNA + AH2 + ATP = 2-thiouridine(34) in tRNA + L-cysteinyl-[protein] + A + AMP + diphosphate + H(+)</text>
        <dbReference type="Rhea" id="RHEA:47032"/>
        <dbReference type="Rhea" id="RHEA-COMP:10131"/>
        <dbReference type="Rhea" id="RHEA-COMP:11726"/>
        <dbReference type="Rhea" id="RHEA-COMP:11727"/>
        <dbReference type="Rhea" id="RHEA-COMP:11728"/>
        <dbReference type="ChEBI" id="CHEBI:13193"/>
        <dbReference type="ChEBI" id="CHEBI:15378"/>
        <dbReference type="ChEBI" id="CHEBI:17499"/>
        <dbReference type="ChEBI" id="CHEBI:29950"/>
        <dbReference type="ChEBI" id="CHEBI:30616"/>
        <dbReference type="ChEBI" id="CHEBI:33019"/>
        <dbReference type="ChEBI" id="CHEBI:61963"/>
        <dbReference type="ChEBI" id="CHEBI:65315"/>
        <dbReference type="ChEBI" id="CHEBI:87170"/>
        <dbReference type="ChEBI" id="CHEBI:456215"/>
        <dbReference type="EC" id="2.8.1.13"/>
    </reaction>
</comment>
<comment type="subcellular location">
    <subcellularLocation>
        <location evidence="1">Cytoplasm</location>
    </subcellularLocation>
</comment>
<comment type="similarity">
    <text evidence="1">Belongs to the MnmA/TRMU family.</text>
</comment>
<accession>Q1IBE4</accession>